<evidence type="ECO:0000250" key="1"/>
<evidence type="ECO:0000250" key="2">
    <source>
        <dbReference type="UniProtKB" id="P68137"/>
    </source>
</evidence>
<evidence type="ECO:0000305" key="3"/>
<dbReference type="EC" id="3.6.4.-" evidence="2"/>
<dbReference type="EMBL" id="L12255">
    <property type="protein sequence ID" value="AAA62343.1"/>
    <property type="molecule type" value="Genomic_DNA"/>
</dbReference>
<dbReference type="RefSeq" id="XP_011208683.2">
    <property type="nucleotide sequence ID" value="XM_011210381.4"/>
</dbReference>
<dbReference type="RefSeq" id="XP_049303073.1">
    <property type="nucleotide sequence ID" value="XM_049447116.1"/>
</dbReference>
<dbReference type="RefSeq" id="XP_049303074.1">
    <property type="nucleotide sequence ID" value="XM_049447117.1"/>
</dbReference>
<dbReference type="SMR" id="P45886"/>
<dbReference type="FunCoup" id="P45886">
    <property type="interactions" value="23"/>
</dbReference>
<dbReference type="EnsemblMetazoa" id="XM_011210381.3">
    <property type="protein sequence ID" value="XP_011208683.2"/>
    <property type="gene ID" value="LOC105229889"/>
</dbReference>
<dbReference type="GeneID" id="105229889"/>
<dbReference type="KEGG" id="bdr:105229889"/>
<dbReference type="InParanoid" id="P45886"/>
<dbReference type="OMA" id="NEMQVAN"/>
<dbReference type="OrthoDB" id="422673at2759"/>
<dbReference type="Proteomes" id="UP000504616">
    <property type="component" value="Unplaced"/>
</dbReference>
<dbReference type="GO" id="GO:0005737">
    <property type="term" value="C:cytoplasm"/>
    <property type="evidence" value="ECO:0007669"/>
    <property type="project" value="UniProtKB-KW"/>
</dbReference>
<dbReference type="GO" id="GO:0005856">
    <property type="term" value="C:cytoskeleton"/>
    <property type="evidence" value="ECO:0007669"/>
    <property type="project" value="UniProtKB-SubCell"/>
</dbReference>
<dbReference type="GO" id="GO:0005524">
    <property type="term" value="F:ATP binding"/>
    <property type="evidence" value="ECO:0007669"/>
    <property type="project" value="UniProtKB-KW"/>
</dbReference>
<dbReference type="GO" id="GO:0016787">
    <property type="term" value="F:hydrolase activity"/>
    <property type="evidence" value="ECO:0007669"/>
    <property type="project" value="UniProtKB-KW"/>
</dbReference>
<dbReference type="CDD" id="cd10224">
    <property type="entry name" value="ASKHA_NBD_actin"/>
    <property type="match status" value="1"/>
</dbReference>
<dbReference type="FunFam" id="3.30.420.40:FF:000131">
    <property type="entry name" value="Actin, alpha skeletal muscle"/>
    <property type="match status" value="1"/>
</dbReference>
<dbReference type="FunFam" id="3.30.420.40:FF:000291">
    <property type="entry name" value="Actin, alpha skeletal muscle"/>
    <property type="match status" value="1"/>
</dbReference>
<dbReference type="FunFam" id="3.90.640.10:FF:000047">
    <property type="entry name" value="Actin, alpha skeletal muscle"/>
    <property type="match status" value="1"/>
</dbReference>
<dbReference type="FunFam" id="3.30.420.40:FF:000058">
    <property type="entry name" value="Putative actin-related protein 5"/>
    <property type="match status" value="1"/>
</dbReference>
<dbReference type="Gene3D" id="3.30.420.40">
    <property type="match status" value="2"/>
</dbReference>
<dbReference type="Gene3D" id="3.90.640.10">
    <property type="entry name" value="Actin, Chain A, domain 4"/>
    <property type="match status" value="1"/>
</dbReference>
<dbReference type="InterPro" id="IPR004000">
    <property type="entry name" value="Actin"/>
</dbReference>
<dbReference type="InterPro" id="IPR020902">
    <property type="entry name" value="Actin/actin-like_CS"/>
</dbReference>
<dbReference type="InterPro" id="IPR004001">
    <property type="entry name" value="Actin_CS"/>
</dbReference>
<dbReference type="InterPro" id="IPR043129">
    <property type="entry name" value="ATPase_NBD"/>
</dbReference>
<dbReference type="PANTHER" id="PTHR11937">
    <property type="entry name" value="ACTIN"/>
    <property type="match status" value="1"/>
</dbReference>
<dbReference type="Pfam" id="PF00022">
    <property type="entry name" value="Actin"/>
    <property type="match status" value="1"/>
</dbReference>
<dbReference type="PRINTS" id="PR00190">
    <property type="entry name" value="ACTIN"/>
</dbReference>
<dbReference type="SMART" id="SM00268">
    <property type="entry name" value="ACTIN"/>
    <property type="match status" value="1"/>
</dbReference>
<dbReference type="SUPFAM" id="SSF53067">
    <property type="entry name" value="Actin-like ATPase domain"/>
    <property type="match status" value="2"/>
</dbReference>
<dbReference type="PROSITE" id="PS00406">
    <property type="entry name" value="ACTINS_1"/>
    <property type="match status" value="1"/>
</dbReference>
<dbReference type="PROSITE" id="PS00432">
    <property type="entry name" value="ACTINS_2"/>
    <property type="match status" value="1"/>
</dbReference>
<dbReference type="PROSITE" id="PS01132">
    <property type="entry name" value="ACTINS_ACT_LIKE"/>
    <property type="match status" value="1"/>
</dbReference>
<keyword id="KW-0007">Acetylation</keyword>
<keyword id="KW-0067">ATP-binding</keyword>
<keyword id="KW-0963">Cytoplasm</keyword>
<keyword id="KW-0206">Cytoskeleton</keyword>
<keyword id="KW-0378">Hydrolase</keyword>
<keyword id="KW-0514">Muscle protein</keyword>
<keyword id="KW-0547">Nucleotide-binding</keyword>
<keyword id="KW-0558">Oxidation</keyword>
<keyword id="KW-1185">Reference proteome</keyword>
<sequence>MCDDEVAALVVDNGSGMCKAGFAGDDAPRAVFPSIVGRPRHQGVMVGMGQKDSYVGDEAQSKRGILTLKYPIEHGIITNWDDMEKIWHHTFYNELRVAPEEHPVLLTEAPLNPKANREKMTQIMFETFNTPAMYVAIQAVLSLYASGRTTGIVLDSGDGVSHTVPIYEGYALPHAILRLDLAGRDLTDYLMKILTERGYSFTTTAEREIVRDIKEKLCYVALDFEQEMATAAASTSLEKSYELPDGQVITIGNERFRCPESLFQPSFLGMESSGIHETVYNSIMKCDVDIRKDLYANIVMSGGTTMYPGIADRMQKEITALAPSTIKIKIIAPPERKYSVWIGGSILASLSTFQQMWISKQEYDESGPGIVHRKCF</sequence>
<organism>
    <name type="scientific">Bactrocera dorsalis</name>
    <name type="common">Oriental fruit fly</name>
    <name type="synonym">Dacus dorsalis</name>
    <dbReference type="NCBI Taxonomy" id="27457"/>
    <lineage>
        <taxon>Eukaryota</taxon>
        <taxon>Metazoa</taxon>
        <taxon>Ecdysozoa</taxon>
        <taxon>Arthropoda</taxon>
        <taxon>Hexapoda</taxon>
        <taxon>Insecta</taxon>
        <taxon>Pterygota</taxon>
        <taxon>Neoptera</taxon>
        <taxon>Endopterygota</taxon>
        <taxon>Diptera</taxon>
        <taxon>Brachycera</taxon>
        <taxon>Muscomorpha</taxon>
        <taxon>Tephritoidea</taxon>
        <taxon>Tephritidae</taxon>
        <taxon>Bactrocera</taxon>
        <taxon>Bactrocera</taxon>
    </lineage>
</organism>
<accession>P45886</accession>
<protein>
    <recommendedName>
        <fullName>Actin-3, muscle-specific</fullName>
        <ecNumber evidence="2">3.6.4.-</ecNumber>
    </recommendedName>
</protein>
<feature type="propeptide" id="PRO_0000000618" description="Removed in mature form" evidence="1">
    <location>
        <begin position="1"/>
        <end position="2"/>
    </location>
</feature>
<feature type="chain" id="PRO_0000000619" description="Actin-3, muscle-specific">
    <location>
        <begin position="3"/>
        <end position="376"/>
    </location>
</feature>
<feature type="modified residue" description="N-acetylaspartate" evidence="1">
    <location>
        <position position="3"/>
    </location>
</feature>
<feature type="modified residue" description="Methionine sulfoxide" evidence="1">
    <location>
        <position position="45"/>
    </location>
</feature>
<feature type="modified residue" description="Methionine sulfoxide" evidence="1">
    <location>
        <position position="48"/>
    </location>
</feature>
<name>ACT3_BACDO</name>
<reference key="1">
    <citation type="journal article" date="1994" name="Insect Biochem. Mol. Biol.">
        <title>The actin gene family in the oriental fruit fly Bactrocera dorsalis. Muscle specific actins.</title>
        <authorList>
            <person name="He M."/>
            <person name="Haymer D.S."/>
        </authorList>
    </citation>
    <scope>NUCLEOTIDE SEQUENCE [GENOMIC DNA]</scope>
    <source>
        <strain>Puna</strain>
    </source>
</reference>
<proteinExistence type="evidence at transcript level"/>
<comment type="function">
    <text>Actins are highly conserved proteins that are involved in various types of cell motility and are ubiquitously expressed in all eukaryotic cells.</text>
</comment>
<comment type="catalytic activity">
    <reaction evidence="2">
        <text>ATP + H2O = ADP + phosphate + H(+)</text>
        <dbReference type="Rhea" id="RHEA:13065"/>
        <dbReference type="ChEBI" id="CHEBI:15377"/>
        <dbReference type="ChEBI" id="CHEBI:15378"/>
        <dbReference type="ChEBI" id="CHEBI:30616"/>
        <dbReference type="ChEBI" id="CHEBI:43474"/>
        <dbReference type="ChEBI" id="CHEBI:456216"/>
    </reaction>
</comment>
<comment type="subcellular location">
    <subcellularLocation>
        <location>Cytoplasm</location>
        <location>Cytoskeleton</location>
    </subcellularLocation>
</comment>
<comment type="tissue specificity">
    <text>Muscle.</text>
</comment>
<comment type="PTM">
    <text evidence="1">Oxidation of Met-45 to form methionine sulfoxide promotes actin filament depolymerization. Methionine sulfoxide is produced stereospecifically, but it is not known whether the (S)-S-oxide or the (R)-S-oxide is produced (By similarity).</text>
</comment>
<comment type="similarity">
    <text evidence="3">Belongs to the actin family.</text>
</comment>